<reference key="1">
    <citation type="journal article" date="1998" name="Mol. Cell. Biol.">
        <title>Two members of the Tcf family implicated in Wnt/b-catenin signaling during embryogenesis in the mouse.</title>
        <authorList>
            <person name="Korinek V."/>
            <person name="Barker N."/>
            <person name="Willert K."/>
            <person name="Molenaar M."/>
            <person name="Roose J."/>
            <person name="Wagenaar G."/>
            <person name="Markman M."/>
            <person name="Lamers W."/>
            <person name="Destree O."/>
            <person name="Clevers H."/>
        </authorList>
    </citation>
    <scope>NUCLEOTIDE SEQUENCE [MRNA] (ISOFORM 1)</scope>
    <source>
        <strain>C57BL/6J</strain>
        <tissue>Embryo</tissue>
    </source>
</reference>
<reference key="2">
    <citation type="journal article" date="1999" name="J. Biol. Chem.">
        <title>A possible role for the high mobility group box transcription factor Tcf-4 in vertebrate gut epithelial cell differentiation.</title>
        <authorList>
            <person name="Lee Y.J."/>
            <person name="Swencki B."/>
            <person name="Shoichet S."/>
            <person name="Shivdasani R.A."/>
        </authorList>
    </citation>
    <scope>NUCLEOTIDE SEQUENCE [MRNA] (ISOFORM 2)</scope>
    <scope>PARTIAL NUCLEOTIDE SEQUENCE [MRNA] (ISOFORMS 1 AND 4)</scope>
    <source>
        <strain>ICR</strain>
        <tissue>Fetal intestine</tissue>
    </source>
</reference>
<reference key="3">
    <citation type="journal article" date="2001" name="Mamm. Genome">
        <title>Identification of members of the Wnt signaling pathway in the embryonic pituitary gland.</title>
        <authorList>
            <person name="Douglas K.R."/>
            <person name="Brinkmeier M.L."/>
            <person name="Kennell J.A."/>
            <person name="Eswara P."/>
            <person name="Harrison T.A."/>
            <person name="Patrianakos A.I."/>
            <person name="Sprecher B.S."/>
            <person name="Potok M.A."/>
            <person name="Lyons R.H. Jr."/>
            <person name="MacDougald O.A."/>
            <person name="Camper S.A."/>
        </authorList>
    </citation>
    <scope>NUCLEOTIDE SEQUENCE [GENOMIC DNA / MRNA] (ISOFORMS 6 AND 7)</scope>
    <scope>PARTIAL NUCLEOTIDE SEQUENCE [MRNA] (ISOFORMS 1; 3 AND 5)</scope>
    <source>
        <strain>C57BL/6J</strain>
        <strain>CD-1</strain>
        <tissue>Pituitary</tissue>
    </source>
</reference>
<reference key="4">
    <citation type="submission" date="2001-12" db="EMBL/GenBank/DDBJ databases">
        <title>A novel isoform of the HMG transcription factor Tcf4.</title>
        <authorList>
            <person name="Bayarsaihan D."/>
        </authorList>
    </citation>
    <scope>NUCLEOTIDE SEQUENCE [MRNA] (ISOFORM 8)</scope>
</reference>
<reference key="5">
    <citation type="journal article" date="2005" name="Science">
        <title>The transcriptional landscape of the mammalian genome.</title>
        <authorList>
            <person name="Carninci P."/>
            <person name="Kasukawa T."/>
            <person name="Katayama S."/>
            <person name="Gough J."/>
            <person name="Frith M.C."/>
            <person name="Maeda N."/>
            <person name="Oyama R."/>
            <person name="Ravasi T."/>
            <person name="Lenhard B."/>
            <person name="Wells C."/>
            <person name="Kodzius R."/>
            <person name="Shimokawa K."/>
            <person name="Bajic V.B."/>
            <person name="Brenner S.E."/>
            <person name="Batalov S."/>
            <person name="Forrest A.R."/>
            <person name="Zavolan M."/>
            <person name="Davis M.J."/>
            <person name="Wilming L.G."/>
            <person name="Aidinis V."/>
            <person name="Allen J.E."/>
            <person name="Ambesi-Impiombato A."/>
            <person name="Apweiler R."/>
            <person name="Aturaliya R.N."/>
            <person name="Bailey T.L."/>
            <person name="Bansal M."/>
            <person name="Baxter L."/>
            <person name="Beisel K.W."/>
            <person name="Bersano T."/>
            <person name="Bono H."/>
            <person name="Chalk A.M."/>
            <person name="Chiu K.P."/>
            <person name="Choudhary V."/>
            <person name="Christoffels A."/>
            <person name="Clutterbuck D.R."/>
            <person name="Crowe M.L."/>
            <person name="Dalla E."/>
            <person name="Dalrymple B.P."/>
            <person name="de Bono B."/>
            <person name="Della Gatta G."/>
            <person name="di Bernardo D."/>
            <person name="Down T."/>
            <person name="Engstrom P."/>
            <person name="Fagiolini M."/>
            <person name="Faulkner G."/>
            <person name="Fletcher C.F."/>
            <person name="Fukushima T."/>
            <person name="Furuno M."/>
            <person name="Futaki S."/>
            <person name="Gariboldi M."/>
            <person name="Georgii-Hemming P."/>
            <person name="Gingeras T.R."/>
            <person name="Gojobori T."/>
            <person name="Green R.E."/>
            <person name="Gustincich S."/>
            <person name="Harbers M."/>
            <person name="Hayashi Y."/>
            <person name="Hensch T.K."/>
            <person name="Hirokawa N."/>
            <person name="Hill D."/>
            <person name="Huminiecki L."/>
            <person name="Iacono M."/>
            <person name="Ikeo K."/>
            <person name="Iwama A."/>
            <person name="Ishikawa T."/>
            <person name="Jakt M."/>
            <person name="Kanapin A."/>
            <person name="Katoh M."/>
            <person name="Kawasawa Y."/>
            <person name="Kelso J."/>
            <person name="Kitamura H."/>
            <person name="Kitano H."/>
            <person name="Kollias G."/>
            <person name="Krishnan S.P."/>
            <person name="Kruger A."/>
            <person name="Kummerfeld S.K."/>
            <person name="Kurochkin I.V."/>
            <person name="Lareau L.F."/>
            <person name="Lazarevic D."/>
            <person name="Lipovich L."/>
            <person name="Liu J."/>
            <person name="Liuni S."/>
            <person name="McWilliam S."/>
            <person name="Madan Babu M."/>
            <person name="Madera M."/>
            <person name="Marchionni L."/>
            <person name="Matsuda H."/>
            <person name="Matsuzawa S."/>
            <person name="Miki H."/>
            <person name="Mignone F."/>
            <person name="Miyake S."/>
            <person name="Morris K."/>
            <person name="Mottagui-Tabar S."/>
            <person name="Mulder N."/>
            <person name="Nakano N."/>
            <person name="Nakauchi H."/>
            <person name="Ng P."/>
            <person name="Nilsson R."/>
            <person name="Nishiguchi S."/>
            <person name="Nishikawa S."/>
            <person name="Nori F."/>
            <person name="Ohara O."/>
            <person name="Okazaki Y."/>
            <person name="Orlando V."/>
            <person name="Pang K.C."/>
            <person name="Pavan W.J."/>
            <person name="Pavesi G."/>
            <person name="Pesole G."/>
            <person name="Petrovsky N."/>
            <person name="Piazza S."/>
            <person name="Reed J."/>
            <person name="Reid J.F."/>
            <person name="Ring B.Z."/>
            <person name="Ringwald M."/>
            <person name="Rost B."/>
            <person name="Ruan Y."/>
            <person name="Salzberg S.L."/>
            <person name="Sandelin A."/>
            <person name="Schneider C."/>
            <person name="Schoenbach C."/>
            <person name="Sekiguchi K."/>
            <person name="Semple C.A."/>
            <person name="Seno S."/>
            <person name="Sessa L."/>
            <person name="Sheng Y."/>
            <person name="Shibata Y."/>
            <person name="Shimada H."/>
            <person name="Shimada K."/>
            <person name="Silva D."/>
            <person name="Sinclair B."/>
            <person name="Sperling S."/>
            <person name="Stupka E."/>
            <person name="Sugiura K."/>
            <person name="Sultana R."/>
            <person name="Takenaka Y."/>
            <person name="Taki K."/>
            <person name="Tammoja K."/>
            <person name="Tan S.L."/>
            <person name="Tang S."/>
            <person name="Taylor M.S."/>
            <person name="Tegner J."/>
            <person name="Teichmann S.A."/>
            <person name="Ueda H.R."/>
            <person name="van Nimwegen E."/>
            <person name="Verardo R."/>
            <person name="Wei C.L."/>
            <person name="Yagi K."/>
            <person name="Yamanishi H."/>
            <person name="Zabarovsky E."/>
            <person name="Zhu S."/>
            <person name="Zimmer A."/>
            <person name="Hide W."/>
            <person name="Bult C."/>
            <person name="Grimmond S.M."/>
            <person name="Teasdale R.D."/>
            <person name="Liu E.T."/>
            <person name="Brusic V."/>
            <person name="Quackenbush J."/>
            <person name="Wahlestedt C."/>
            <person name="Mattick J.S."/>
            <person name="Hume D.A."/>
            <person name="Kai C."/>
            <person name="Sasaki D."/>
            <person name="Tomaru Y."/>
            <person name="Fukuda S."/>
            <person name="Kanamori-Katayama M."/>
            <person name="Suzuki M."/>
            <person name="Aoki J."/>
            <person name="Arakawa T."/>
            <person name="Iida J."/>
            <person name="Imamura K."/>
            <person name="Itoh M."/>
            <person name="Kato T."/>
            <person name="Kawaji H."/>
            <person name="Kawagashira N."/>
            <person name="Kawashima T."/>
            <person name="Kojima M."/>
            <person name="Kondo S."/>
            <person name="Konno H."/>
            <person name="Nakano K."/>
            <person name="Ninomiya N."/>
            <person name="Nishio T."/>
            <person name="Okada M."/>
            <person name="Plessy C."/>
            <person name="Shibata K."/>
            <person name="Shiraki T."/>
            <person name="Suzuki S."/>
            <person name="Tagami M."/>
            <person name="Waki K."/>
            <person name="Watahiki A."/>
            <person name="Okamura-Oho Y."/>
            <person name="Suzuki H."/>
            <person name="Kawai J."/>
            <person name="Hayashizaki Y."/>
        </authorList>
    </citation>
    <scope>NUCLEOTIDE SEQUENCE [LARGE SCALE MRNA] (ISOFORM 9)</scope>
    <source>
        <strain>C57BL/6J</strain>
        <tissue>Head</tissue>
    </source>
</reference>
<reference key="6">
    <citation type="journal article" date="2009" name="PLoS Biol.">
        <title>Lineage-specific biology revealed by a finished genome assembly of the mouse.</title>
        <authorList>
            <person name="Church D.M."/>
            <person name="Goodstadt L."/>
            <person name="Hillier L.W."/>
            <person name="Zody M.C."/>
            <person name="Goldstein S."/>
            <person name="She X."/>
            <person name="Bult C.J."/>
            <person name="Agarwala R."/>
            <person name="Cherry J.L."/>
            <person name="DiCuccio M."/>
            <person name="Hlavina W."/>
            <person name="Kapustin Y."/>
            <person name="Meric P."/>
            <person name="Maglott D."/>
            <person name="Birtle Z."/>
            <person name="Marques A.C."/>
            <person name="Graves T."/>
            <person name="Zhou S."/>
            <person name="Teague B."/>
            <person name="Potamousis K."/>
            <person name="Churas C."/>
            <person name="Place M."/>
            <person name="Herschleb J."/>
            <person name="Runnheim R."/>
            <person name="Forrest D."/>
            <person name="Amos-Landgraf J."/>
            <person name="Schwartz D.C."/>
            <person name="Cheng Z."/>
            <person name="Lindblad-Toh K."/>
            <person name="Eichler E.E."/>
            <person name="Ponting C.P."/>
        </authorList>
    </citation>
    <scope>NUCLEOTIDE SEQUENCE [LARGE SCALE GENOMIC DNA]</scope>
    <source>
        <strain>C57BL/6J</strain>
    </source>
</reference>
<reference key="7">
    <citation type="journal article" date="1998" name="Nat. Genet.">
        <title>Depletion of epithelial stem-cell compartments in the small intestine of mice lacking Tcf-4.</title>
        <authorList>
            <person name="Korinek V."/>
            <person name="Barker N."/>
            <person name="Moerer P."/>
            <person name="van Donselaar E."/>
            <person name="Huls G."/>
            <person name="Peters P.J."/>
            <person name="Clevers H."/>
        </authorList>
    </citation>
    <scope>FUNCTION</scope>
</reference>
<reference key="8">
    <citation type="journal article" date="2006" name="J. Biol. Chem.">
        <title>HIC-5 is a novel repressor of lymphoid enhancer factor/T-cell factor-driven transcription.</title>
        <authorList>
            <person name="Ghogomu S.M."/>
            <person name="van Venrooy S."/>
            <person name="Ritthaler M."/>
            <person name="Wedlich D."/>
            <person name="Gradl D."/>
        </authorList>
    </citation>
    <scope>INTERACTION WITH TGFB1I1</scope>
</reference>
<reference key="9">
    <citation type="journal article" date="2009" name="EMBO J.">
        <title>The kinase TNIK is an essential activator of Wnt target genes.</title>
        <authorList>
            <person name="Mahmoudi T."/>
            <person name="Li V.S.W."/>
            <person name="Ng S.S."/>
            <person name="Taouatas N."/>
            <person name="Vries R.G.J."/>
            <person name="Mohammed S."/>
            <person name="Heck A.J."/>
            <person name="Clevers H."/>
        </authorList>
    </citation>
    <scope>INTERACTION WITH TNIK AND CTNNB1</scope>
</reference>
<reference key="10">
    <citation type="journal article" date="2011" name="Genes Dev.">
        <title>A novel mechanism for the transcriptional regulation of Wnt signaling in development.</title>
        <authorList>
            <person name="Vacik T."/>
            <person name="Stubbs J.L."/>
            <person name="Lemke G."/>
        </authorList>
    </citation>
    <scope>FUNCTION</scope>
</reference>
<accession>Q924A0</accession>
<accession>O70574</accession>
<accession>Q8C834</accession>
<accession>Q91XP2</accession>
<accession>Q91XP3</accession>
<accession>Q91XP4</accession>
<accession>Q924A1</accession>
<accession>Q9Z0V3</accession>
<accession>Q9Z0V4</accession>
<protein>
    <recommendedName>
        <fullName>Transcription factor 7-like 2</fullName>
    </recommendedName>
    <alternativeName>
        <fullName>HMG box transcription factor 4</fullName>
    </alternativeName>
    <alternativeName>
        <fullName>T-cell-specific transcription factor 4</fullName>
        <shortName>T-cell factor 4</shortName>
        <shortName>TCF-4</shortName>
        <shortName>mTCF-4</shortName>
    </alternativeName>
</protein>
<keyword id="KW-0010">Activator</keyword>
<keyword id="KW-0025">Alternative splicing</keyword>
<keyword id="KW-0238">DNA-binding</keyword>
<keyword id="KW-1017">Isopeptide bond</keyword>
<keyword id="KW-0539">Nucleus</keyword>
<keyword id="KW-0597">Phosphoprotein</keyword>
<keyword id="KW-1185">Reference proteome</keyword>
<keyword id="KW-0678">Repressor</keyword>
<keyword id="KW-0804">Transcription</keyword>
<keyword id="KW-0805">Transcription regulation</keyword>
<keyword id="KW-0832">Ubl conjugation</keyword>
<keyword id="KW-0879">Wnt signaling pathway</keyword>
<name>TF7L2_MOUSE</name>
<feature type="chain" id="PRO_0000048624" description="Transcription factor 7-like 2">
    <location>
        <begin position="1"/>
        <end position="459"/>
    </location>
</feature>
<feature type="DNA-binding region" description="HMG box" evidence="4">
    <location>
        <begin position="327"/>
        <end position="395"/>
    </location>
</feature>
<feature type="region of interest" description="Disordered" evidence="5">
    <location>
        <begin position="1"/>
        <end position="96"/>
    </location>
</feature>
<feature type="region of interest" description="CTNNB1-binding">
    <location>
        <begin position="1"/>
        <end position="53"/>
    </location>
</feature>
<feature type="region of interest" description="Mediates interaction with MAD2L2" evidence="1">
    <location>
        <begin position="178"/>
        <end position="372"/>
    </location>
</feature>
<feature type="region of interest" description="Disordered" evidence="5">
    <location>
        <begin position="295"/>
        <end position="327"/>
    </location>
</feature>
<feature type="region of interest" description="Disordered" evidence="5">
    <location>
        <begin position="397"/>
        <end position="418"/>
    </location>
</feature>
<feature type="short sequence motif" description="Nuclear localization signal" evidence="3">
    <location>
        <begin position="402"/>
        <end position="408"/>
    </location>
</feature>
<feature type="compositionally biased region" description="Gly residues" evidence="5">
    <location>
        <begin position="1"/>
        <end position="11"/>
    </location>
</feature>
<feature type="compositionally biased region" description="Basic and acidic residues" evidence="5">
    <location>
        <begin position="19"/>
        <end position="43"/>
    </location>
</feature>
<feature type="compositionally biased region" description="Polar residues" evidence="5">
    <location>
        <begin position="47"/>
        <end position="56"/>
    </location>
</feature>
<feature type="compositionally biased region" description="Basic and acidic residues" evidence="5">
    <location>
        <begin position="63"/>
        <end position="91"/>
    </location>
</feature>
<feature type="compositionally biased region" description="Polar residues" evidence="5">
    <location>
        <begin position="295"/>
        <end position="305"/>
    </location>
</feature>
<feature type="compositionally biased region" description="Basic and acidic residues" evidence="5">
    <location>
        <begin position="312"/>
        <end position="323"/>
    </location>
</feature>
<feature type="modified residue" description="Phosphothreonine; by NLK" evidence="2">
    <location>
        <position position="178"/>
    </location>
</feature>
<feature type="modified residue" description="Phosphothreonine; by NLK" evidence="2">
    <location>
        <position position="189"/>
    </location>
</feature>
<feature type="cross-link" description="Glycyl lysine isopeptide (Lys-Gly) (interchain with G-Cter in SUMO2)" evidence="2">
    <location>
        <position position="22"/>
    </location>
</feature>
<feature type="cross-link" description="Glycyl lysine isopeptide (Lys-Gly) (interchain with G-Cter in SUMO)" evidence="1">
    <location>
        <position position="297"/>
    </location>
</feature>
<feature type="splice variant" id="VSP_043205" description="In isoform 9." evidence="11">
    <original>MPQLNGGGGDDLGANDELISFKDEGEQEEKNSENSSAERDLADVKSSLVNESETNQDSSSDSEAERRPPPRSESFRDKSRESLEEAAKRQDGGLFKGPPYPGYPFIMIPDLTSPYLPNGSLSPTARTYLQMKWPLLDVQAGSLQSRQTLKDARSPSPAHIV</original>
    <variation>M</variation>
    <location>
        <begin position="1"/>
        <end position="161"/>
    </location>
</feature>
<feature type="splice variant" id="VSP_006973" description="In isoform 7." evidence="10">
    <original>T</original>
    <variation>TLHFQSGSTHYSAYKTIEHQIAIQ</variation>
    <location>
        <position position="127"/>
    </location>
</feature>
<feature type="splice variant" id="VSP_006974" description="In isoform 5." evidence="14">
    <original>V</original>
    <variation>VQSPLPCCTQGHACPHFYTPSDFTVSTQVFRDTKSSHSLQKVGEPWYLE</variation>
    <location>
        <position position="161"/>
    </location>
</feature>
<feature type="splice variant" id="VSP_006975" description="In isoform 3 and isoform 7." evidence="10">
    <location>
        <begin position="237"/>
        <end position="240"/>
    </location>
</feature>
<feature type="splice variant" id="VSP_006976" description="In isoform 2 and isoform 8." evidence="12 13">
    <original>S</original>
    <variation>SSFLSS</variation>
    <location>
        <position position="268"/>
    </location>
</feature>
<feature type="splice variant" id="VSP_006977" description="In isoform 5, isoform 6 and isoform 7." evidence="10">
    <location>
        <begin position="270"/>
        <end position="459"/>
    </location>
</feature>
<feature type="splice variant" id="VSP_006979" description="In isoform 2." evidence="12">
    <original>EHSECFLNPCLSLPPITDLSAPKKCRARFGLDQQNNWCGPCSL</original>
    <variation>GEKKSAFATYKVKAAASAHPLQMEAY</variation>
    <location>
        <begin position="417"/>
        <end position="459"/>
    </location>
</feature>
<feature type="splice variant" id="VSP_006980" description="In isoform 8." evidence="13">
    <original>EHSECFLNPCLSLPPITDLSAPKKCRARFGLDQQNNWCGPCSL</original>
    <variation>GERGESGRWRLEDHSYVRLPSGGGRRNPRPGHCGEPILGSLFCLCVF</variation>
    <location>
        <begin position="417"/>
        <end position="459"/>
    </location>
</feature>
<feature type="splice variant" id="VSP_006978" description="In isoform 4." evidence="14">
    <location>
        <begin position="417"/>
        <end position="433"/>
    </location>
</feature>
<feature type="splice variant" id="VSP_006981" description="In isoform 4." evidence="14">
    <original>CSL</original>
    <variation>ADANTPKKCRALFGLDRQTLWCKPCRRKKKCVRYIQGEGSCLSPPSSDGSLLDSPPPSPHLLGSPPQDAKSQTEQTQPLSLSLKPDPLAHLSMMPPPPALLLAEAAHGKASALCPNGALDLPPAALQPSMVPSSSLAQPSTSSLHSHNSLAGTQPQPLSLVTKSLE</variation>
    <location>
        <begin position="457"/>
        <end position="459"/>
    </location>
</feature>
<feature type="sequence conflict" description="In Ref. 2; AAD16967 and 3; AAK77488/AAK77489/AAK77490." evidence="14" ref="2 3">
    <original>D</original>
    <variation>N</variation>
    <location>
        <position position="57"/>
    </location>
</feature>
<feature type="sequence conflict" description="In Ref. 4; AAL58534." evidence="14" ref="4">
    <original>W</original>
    <variation>R</variation>
    <location>
        <position position="236"/>
    </location>
</feature>
<feature type="sequence conflict" description="In Ref. 2; AAD16968." evidence="14" ref="2">
    <original>K</original>
    <variation>Q</variation>
    <location>
        <position position="410"/>
    </location>
</feature>
<sequence length="459" mass="51217">MPQLNGGGGDDLGANDELISFKDEGEQEEKNSENSSAERDLADVKSSLVNESETNQDSSSDSEAERRPPPRSESFRDKSRESLEEAAKRQDGGLFKGPPYPGYPFIMIPDLTSPYLPNGSLSPTARTYLQMKWPLLDVQAGSLQSRQTLKDARSPSPAHIVSNKVPVVQHPHHVHPLTPLITYSNEHFTPGNPPPHLPADVDPKTGIPRPPHPPDISPYYPLSPGTVGQIPHPLGWLVPQQGQPVYPITTGGFRHPYPTALTVNASMSRFPPHMVPPHHTLHTTGIPHPAIVTPTVKQESSQSDVGSLHSSKHQDSKKEEEKKKPHIKKPLNAFMLYMKEMRAKVVAECTLKESAAINQILGRRWHALSREEQAKYYELARKERQLHMQLYPGWSARDNYGKKKKRKRDKQPGETNEHSECFLNPCLSLPPITDLSAPKKCRARFGLDQQNNWCGPCSL</sequence>
<organism>
    <name type="scientific">Mus musculus</name>
    <name type="common">Mouse</name>
    <dbReference type="NCBI Taxonomy" id="10090"/>
    <lineage>
        <taxon>Eukaryota</taxon>
        <taxon>Metazoa</taxon>
        <taxon>Chordata</taxon>
        <taxon>Craniata</taxon>
        <taxon>Vertebrata</taxon>
        <taxon>Euteleostomi</taxon>
        <taxon>Mammalia</taxon>
        <taxon>Eutheria</taxon>
        <taxon>Euarchontoglires</taxon>
        <taxon>Glires</taxon>
        <taxon>Rodentia</taxon>
        <taxon>Myomorpha</taxon>
        <taxon>Muroidea</taxon>
        <taxon>Muridae</taxon>
        <taxon>Murinae</taxon>
        <taxon>Mus</taxon>
        <taxon>Mus</taxon>
    </lineage>
</organism>
<evidence type="ECO:0000250" key="1"/>
<evidence type="ECO:0000250" key="2">
    <source>
        <dbReference type="UniProtKB" id="Q9NQB0"/>
    </source>
</evidence>
<evidence type="ECO:0000255" key="3"/>
<evidence type="ECO:0000255" key="4">
    <source>
        <dbReference type="PROSITE-ProRule" id="PRU00267"/>
    </source>
</evidence>
<evidence type="ECO:0000256" key="5">
    <source>
        <dbReference type="SAM" id="MobiDB-lite"/>
    </source>
</evidence>
<evidence type="ECO:0000269" key="6">
    <source>
    </source>
</evidence>
<evidence type="ECO:0000269" key="7">
    <source>
    </source>
</evidence>
<evidence type="ECO:0000269" key="8">
    <source>
    </source>
</evidence>
<evidence type="ECO:0000269" key="9">
    <source>
    </source>
</evidence>
<evidence type="ECO:0000303" key="10">
    <source>
    </source>
</evidence>
<evidence type="ECO:0000303" key="11">
    <source>
    </source>
</evidence>
<evidence type="ECO:0000303" key="12">
    <source>
    </source>
</evidence>
<evidence type="ECO:0000303" key="13">
    <source ref="4"/>
</evidence>
<evidence type="ECO:0000305" key="14"/>
<proteinExistence type="evidence at protein level"/>
<gene>
    <name type="primary">Tcf7l2</name>
    <name type="synonym">Tcf4</name>
</gene>
<comment type="function">
    <text evidence="1 8 9">Participates in the Wnt signaling pathway and modulates MYC expression by binding to its promoter in a sequence-specific manner. Acts as a repressor in the absence of CTNNB1, and as activator in its presence. Activates transcription from promoters with several copies of the Tcf motif CCTTTGATC in the presence of CTNNB1. TLE1, TLE2, TLE3 and TLE4 repress transactivation mediated by TCF7L2/TCF4 and CTNNB1. Expression of dominant-negative mutants results in cell-cycle arrest in G1 (By similarity). Necessary for the maintenance of the epithelial stem-cell compartment of the small intestine.</text>
</comment>
<comment type="subunit">
    <text evidence="2 6 7">Interacts with TGFB1I1 (PubMed:16291758). Interacts with SPIN1 (By similarity). Interacts with CTNNB1 (via the armadillo repeat); forms stable transcription complex (PubMed:19816403). Interacts with EP300. Interacts with NLK. Interacts with CCDC85B (probably through the HMG box); prevents interaction with CTNNB1 (By similarity). Interacts with TNIK (PubMed:19816403). Interacts with MAD2L2; prevents TCF7L2/TCF4 binding to promZIPK/DAPK3oters, negatively modulating its transcriptional activity. Interacts with ZIPK/DAPK3. Interacts with XIAP/BIRC4 and TLE3. Interacts with DDIT3/CHOP. The CTNNB1 and TCF7L2/TCF4 complex interacts with PML (isoform PML-4). Identified in a complex with CTNNB1 and FERMT2. Interacts with C11orf84/SPINDOC in a SPIN1-dependent manner (By similarity). Interacts with DAZAP2; the interaction results in localization of DAZAP2 to the nucleus (By similarity).</text>
</comment>
<comment type="interaction">
    <interactant intactId="EBI-646713">
        <id>Q924A0</id>
    </interactant>
    <interactant intactId="EBI-5236187">
        <id>Q9R1Y5</id>
        <label>Hic1</label>
    </interactant>
    <organismsDiffer>false</organismsDiffer>
    <experiments>4</experiments>
</comment>
<comment type="interaction">
    <interactant intactId="EBI-646713">
        <id>Q924A0</id>
    </interactant>
    <interactant intactId="EBI-520123">
        <id>P39428</id>
        <label>Traf1</label>
    </interactant>
    <organismsDiffer>false</organismsDiffer>
    <experiments>6</experiments>
</comment>
<comment type="subcellular location">
    <subcellularLocation>
        <location evidence="2">Nucleus</location>
        <location evidence="2">PML body</location>
    </subcellularLocation>
    <subcellularLocation>
        <location evidence="2">Nucleus</location>
    </subcellularLocation>
    <text evidence="2">Diffuse pattern. Colocalizes with SUMO1 and PIAS4 in a subset of PML (promyelocytic leukemia) nuclear bodies (By similarity).</text>
</comment>
<comment type="alternative products">
    <event type="alternative splicing"/>
    <isoform>
        <id>Q924A0-1</id>
        <name>1</name>
        <sequence type="displayed"/>
    </isoform>
    <isoform>
        <id>Q924A0-2</id>
        <name>2</name>
        <sequence type="described" ref="VSP_006976 VSP_006979"/>
    </isoform>
    <isoform>
        <id>Q924A0-3</id>
        <name>3</name>
        <sequence type="described" ref="VSP_006975"/>
    </isoform>
    <isoform>
        <id>Q924A0-4</id>
        <name>4</name>
        <sequence type="described" ref="VSP_006978 VSP_006981"/>
    </isoform>
    <isoform>
        <id>Q924A0-5</id>
        <name>5</name>
        <sequence type="described" ref="VSP_006974 VSP_006977"/>
    </isoform>
    <isoform>
        <id>Q924A0-6</id>
        <name>6</name>
        <sequence type="described" ref="VSP_006977"/>
    </isoform>
    <isoform>
        <id>Q924A0-7</id>
        <name>7</name>
        <sequence type="described" ref="VSP_006973 VSP_006975 VSP_006977"/>
    </isoform>
    <isoform>
        <id>Q924A0-8</id>
        <name>8</name>
        <sequence type="described" ref="VSP_006976 VSP_006980"/>
    </isoform>
    <isoform>
        <id>Q924A0-9</id>
        <name>9</name>
        <name>dnTcf7l2 exon1b/c</name>
        <sequence type="described" ref="VSP_043205"/>
    </isoform>
</comment>
<comment type="tissue specificity">
    <text>Detected in adult brain and liver, and at lower levels in intestine, with a clear increase from the distal colon to the duodenum. Detected at low levels in heart, lung, kidney, pituitary and testis.</text>
</comment>
<comment type="developmental stage">
    <text>First detected at 10.5 dpc. Highly expressed at 13.5 dpc-16.5 dpc in the central nervous system, in particular in the roof of the mesencephalon, at the ditelencephalic junction and in dorsal thalamus. At 13.5 dpc, detected at low levels in gastrointestinal epithelia.</text>
</comment>
<comment type="PTM">
    <text evidence="1">Phosphorylated at Thr-178 and/or Thr-189 by NLK. Phosphorylation by NLK at these sites inhibits DNA-binding by TCF7L2/TCF4, thereby preventing transcriptional activation of target genes of the canonical Wnt/beta-catenin signaling pathway (By similarity).</text>
</comment>
<comment type="PTM">
    <text evidence="1">Polysumoylated. Sumoylation is enhanced by PIAS family members and desumoylation is enhanced by SENP2. Sumoylation/desumoylation regulates TCF7L2/TCF4 transcription activity in the Wnt/beta-catenin signaling pathway without altering interaction with CTNNB1 nor binding to DNA (By similarity).</text>
</comment>
<comment type="disease">
    <text>Constitutive activation and subsequent transactivation of target genes may lead to the maintenance of stem-cell characteristics (cycling and longevity) in cells that should normally undergo terminal differentiation and constitute the primary transforming event in colorectal cancer (CRC).</text>
</comment>
<comment type="miscellaneous">
    <molecule>Isoform 8</molecule>
    <text evidence="14">May result from the retention of an intron in the cDNA.</text>
</comment>
<comment type="miscellaneous">
    <molecule>Isoform 9</molecule>
    <text evidence="14">Dominant negative form which cannot bind CTNNB1. Expression is VAX2-dependent.</text>
</comment>
<comment type="similarity">
    <text evidence="14">Belongs to the TCF/LEF family.</text>
</comment>
<dbReference type="EMBL" id="AJ223070">
    <property type="protein sequence ID" value="CAA11071.1"/>
    <property type="molecule type" value="mRNA"/>
</dbReference>
<dbReference type="EMBL" id="AF107298">
    <property type="protein sequence ID" value="AAD16967.1"/>
    <property type="molecule type" value="mRNA"/>
</dbReference>
<dbReference type="EMBL" id="AF107299">
    <property type="protein sequence ID" value="AAD16968.1"/>
    <property type="molecule type" value="mRNA"/>
</dbReference>
<dbReference type="EMBL" id="AF363722">
    <property type="protein sequence ID" value="AAK77485.1"/>
    <property type="molecule type" value="Genomic_DNA"/>
</dbReference>
<dbReference type="EMBL" id="AF363722">
    <property type="protein sequence ID" value="AAK77486.1"/>
    <property type="molecule type" value="Genomic_DNA"/>
</dbReference>
<dbReference type="EMBL" id="AF363724">
    <property type="protein sequence ID" value="AAK77488.1"/>
    <property type="molecule type" value="mRNA"/>
</dbReference>
<dbReference type="EMBL" id="AF363725">
    <property type="protein sequence ID" value="AAK77489.1"/>
    <property type="molecule type" value="mRNA"/>
</dbReference>
<dbReference type="EMBL" id="AF363726">
    <property type="protein sequence ID" value="AAK77490.1"/>
    <property type="molecule type" value="mRNA"/>
</dbReference>
<dbReference type="EMBL" id="AY072035">
    <property type="protein sequence ID" value="AAL58534.1"/>
    <property type="molecule type" value="mRNA"/>
</dbReference>
<dbReference type="EMBL" id="AK048536">
    <property type="protein sequence ID" value="BAC33366.1"/>
    <property type="molecule type" value="mRNA"/>
</dbReference>
<dbReference type="EMBL" id="AC118695">
    <property type="status" value="NOT_ANNOTATED_CDS"/>
    <property type="molecule type" value="Genomic_DNA"/>
</dbReference>
<dbReference type="EMBL" id="AC137148">
    <property type="status" value="NOT_ANNOTATED_CDS"/>
    <property type="molecule type" value="Genomic_DNA"/>
</dbReference>
<dbReference type="EMBL" id="AC157916">
    <property type="status" value="NOT_ANNOTATED_CDS"/>
    <property type="molecule type" value="Genomic_DNA"/>
</dbReference>
<dbReference type="CCDS" id="CCDS50470.1">
    <molecule id="Q924A0-2"/>
</dbReference>
<dbReference type="CCDS" id="CCDS50471.1">
    <molecule id="Q924A0-1"/>
</dbReference>
<dbReference type="CCDS" id="CCDS50474.1">
    <molecule id="Q924A0-9"/>
</dbReference>
<dbReference type="RefSeq" id="NP_001136390.1">
    <property type="nucleotide sequence ID" value="NM_001142918.2"/>
</dbReference>
<dbReference type="RefSeq" id="NP_001136393.1">
    <property type="nucleotide sequence ID" value="NM_001142921.2"/>
</dbReference>
<dbReference type="RefSeq" id="NP_001136396.1">
    <molecule id="Q924A0-9"/>
    <property type="nucleotide sequence ID" value="NM_001142924.2"/>
</dbReference>
<dbReference type="RefSeq" id="XP_030106719.1">
    <molecule id="Q924A0-9"/>
    <property type="nucleotide sequence ID" value="XM_030250859.1"/>
</dbReference>
<dbReference type="SMR" id="Q924A0"/>
<dbReference type="BioGRID" id="204009">
    <property type="interactions" value="33"/>
</dbReference>
<dbReference type="DIP" id="DIP-40920N"/>
<dbReference type="FunCoup" id="Q924A0">
    <property type="interactions" value="2154"/>
</dbReference>
<dbReference type="IntAct" id="Q924A0">
    <property type="interactions" value="5"/>
</dbReference>
<dbReference type="MINT" id="Q924A0"/>
<dbReference type="STRING" id="10090.ENSMUSP00000107284"/>
<dbReference type="iPTMnet" id="Q924A0"/>
<dbReference type="PhosphoSitePlus" id="Q924A0"/>
<dbReference type="PaxDb" id="10090-ENSMUSP00000107283"/>
<dbReference type="PeptideAtlas" id="Q924A0"/>
<dbReference type="ProteomicsDB" id="263113">
    <molecule id="Q924A0-1"/>
</dbReference>
<dbReference type="ProteomicsDB" id="263114">
    <molecule id="Q924A0-2"/>
</dbReference>
<dbReference type="ProteomicsDB" id="263115">
    <molecule id="Q924A0-3"/>
</dbReference>
<dbReference type="ProteomicsDB" id="263116">
    <molecule id="Q924A0-4"/>
</dbReference>
<dbReference type="ProteomicsDB" id="263117">
    <molecule id="Q924A0-5"/>
</dbReference>
<dbReference type="ProteomicsDB" id="263118">
    <molecule id="Q924A0-6"/>
</dbReference>
<dbReference type="ProteomicsDB" id="263119">
    <molecule id="Q924A0-7"/>
</dbReference>
<dbReference type="ProteomicsDB" id="263120">
    <molecule id="Q924A0-8"/>
</dbReference>
<dbReference type="ProteomicsDB" id="263121">
    <molecule id="Q924A0-9"/>
</dbReference>
<dbReference type="Pumba" id="Q924A0"/>
<dbReference type="Antibodypedia" id="31824">
    <property type="antibodies" value="464 antibodies from 35 providers"/>
</dbReference>
<dbReference type="DNASU" id="21416"/>
<dbReference type="Ensembl" id="ENSMUST00000111646.8">
    <molecule id="Q924A0-9"/>
    <property type="protein sequence ID" value="ENSMUSP00000107273.2"/>
    <property type="gene ID" value="ENSMUSG00000024985.22"/>
</dbReference>
<dbReference type="GeneID" id="21416"/>
<dbReference type="KEGG" id="mmu:21416"/>
<dbReference type="UCSC" id="uc008hya.2">
    <molecule id="Q924A0-6"/>
    <property type="organism name" value="mouse"/>
</dbReference>
<dbReference type="UCSC" id="uc008hyb.2">
    <molecule id="Q924A0-5"/>
    <property type="organism name" value="mouse"/>
</dbReference>
<dbReference type="UCSC" id="uc008hyk.2">
    <molecule id="Q924A0-2"/>
    <property type="organism name" value="mouse"/>
</dbReference>
<dbReference type="UCSC" id="uc008hyn.2">
    <molecule id="Q924A0-9"/>
    <property type="organism name" value="mouse"/>
</dbReference>
<dbReference type="AGR" id="MGI:1202879"/>
<dbReference type="CTD" id="6934"/>
<dbReference type="MGI" id="MGI:1202879">
    <property type="gene designation" value="Tcf7l2"/>
</dbReference>
<dbReference type="VEuPathDB" id="HostDB:ENSMUSG00000024985"/>
<dbReference type="eggNOG" id="KOG3248">
    <property type="taxonomic scope" value="Eukaryota"/>
</dbReference>
<dbReference type="GeneTree" id="ENSGT00940000155535"/>
<dbReference type="HOGENOM" id="CLU_013229_1_0_1"/>
<dbReference type="InParanoid" id="Q924A0"/>
<dbReference type="Reactome" id="R-MMU-201722">
    <property type="pathway name" value="Formation of the beta-catenin:TCF transactivating complex"/>
</dbReference>
<dbReference type="Reactome" id="R-MMU-3769402">
    <property type="pathway name" value="Deactivation of the beta-catenin transactivating complex"/>
</dbReference>
<dbReference type="Reactome" id="R-MMU-4086398">
    <property type="pathway name" value="Ca2+ pathway"/>
</dbReference>
<dbReference type="Reactome" id="R-MMU-4641265">
    <property type="pathway name" value="Repression of WNT target genes"/>
</dbReference>
<dbReference type="Reactome" id="R-MMU-8951430">
    <property type="pathway name" value="RUNX3 regulates WNT signaling"/>
</dbReference>
<dbReference type="Reactome" id="R-MMU-9825892">
    <property type="pathway name" value="Regulation of MITF-M-dependent genes involved in cell cycle and proliferation"/>
</dbReference>
<dbReference type="BioGRID-ORCS" id="21416">
    <property type="hits" value="3 hits in 82 CRISPR screens"/>
</dbReference>
<dbReference type="ChiTaRS" id="Tcf7l2">
    <property type="organism name" value="mouse"/>
</dbReference>
<dbReference type="PRO" id="PR:Q924A0"/>
<dbReference type="Proteomes" id="UP000000589">
    <property type="component" value="Chromosome 19"/>
</dbReference>
<dbReference type="RNAct" id="Q924A0">
    <property type="molecule type" value="protein"/>
</dbReference>
<dbReference type="Bgee" id="ENSMUSG00000024985">
    <property type="expression patterns" value="Expressed in medial dorsal nucleus of thalamus and 299 other cell types or tissues"/>
</dbReference>
<dbReference type="ExpressionAtlas" id="Q924A0">
    <property type="expression patterns" value="baseline and differential"/>
</dbReference>
<dbReference type="GO" id="GO:0071664">
    <property type="term" value="C:catenin-TCF7L2 complex"/>
    <property type="evidence" value="ECO:0000314"/>
    <property type="project" value="BHF-UCL"/>
</dbReference>
<dbReference type="GO" id="GO:0005829">
    <property type="term" value="C:cytosol"/>
    <property type="evidence" value="ECO:0000314"/>
    <property type="project" value="BHF-UCL"/>
</dbReference>
<dbReference type="GO" id="GO:0005654">
    <property type="term" value="C:nucleoplasm"/>
    <property type="evidence" value="ECO:0000304"/>
    <property type="project" value="Reactome"/>
</dbReference>
<dbReference type="GO" id="GO:0005634">
    <property type="term" value="C:nucleus"/>
    <property type="evidence" value="ECO:0000314"/>
    <property type="project" value="BHF-UCL"/>
</dbReference>
<dbReference type="GO" id="GO:0016605">
    <property type="term" value="C:PML body"/>
    <property type="evidence" value="ECO:0007669"/>
    <property type="project" value="UniProtKB-SubCell"/>
</dbReference>
<dbReference type="GO" id="GO:0005667">
    <property type="term" value="C:transcription regulator complex"/>
    <property type="evidence" value="ECO:0000314"/>
    <property type="project" value="MGI"/>
</dbReference>
<dbReference type="GO" id="GO:0008013">
    <property type="term" value="F:beta-catenin binding"/>
    <property type="evidence" value="ECO:0000314"/>
    <property type="project" value="MGI"/>
</dbReference>
<dbReference type="GO" id="GO:0003682">
    <property type="term" value="F:chromatin binding"/>
    <property type="evidence" value="ECO:0000314"/>
    <property type="project" value="MGI"/>
</dbReference>
<dbReference type="GO" id="GO:0000978">
    <property type="term" value="F:RNA polymerase II cis-regulatory region sequence-specific DNA binding"/>
    <property type="evidence" value="ECO:0000314"/>
    <property type="project" value="MGI"/>
</dbReference>
<dbReference type="GO" id="GO:0043565">
    <property type="term" value="F:sequence-specific DNA binding"/>
    <property type="evidence" value="ECO:0000314"/>
    <property type="project" value="BHF-UCL"/>
</dbReference>
<dbReference type="GO" id="GO:0000976">
    <property type="term" value="F:transcription cis-regulatory region binding"/>
    <property type="evidence" value="ECO:0000314"/>
    <property type="project" value="MGI"/>
</dbReference>
<dbReference type="GO" id="GO:0030509">
    <property type="term" value="P:BMP signaling pathway"/>
    <property type="evidence" value="ECO:0000315"/>
    <property type="project" value="MGI"/>
</dbReference>
<dbReference type="GO" id="GO:0030282">
    <property type="term" value="P:bone mineralization"/>
    <property type="evidence" value="ECO:0000316"/>
    <property type="project" value="MGI"/>
</dbReference>
<dbReference type="GO" id="GO:0060070">
    <property type="term" value="P:canonical Wnt signaling pathway"/>
    <property type="evidence" value="ECO:0000314"/>
    <property type="project" value="MGI"/>
</dbReference>
<dbReference type="GO" id="GO:0009267">
    <property type="term" value="P:cellular response to starvation"/>
    <property type="evidence" value="ECO:0000315"/>
    <property type="project" value="MGI"/>
</dbReference>
<dbReference type="GO" id="GO:0048557">
    <property type="term" value="P:embryonic digestive tract morphogenesis"/>
    <property type="evidence" value="ECO:0000316"/>
    <property type="project" value="MGI"/>
</dbReference>
<dbReference type="GO" id="GO:0030538">
    <property type="term" value="P:embryonic genitalia morphogenesis"/>
    <property type="evidence" value="ECO:0000316"/>
    <property type="project" value="MGI"/>
</dbReference>
<dbReference type="GO" id="GO:0048619">
    <property type="term" value="P:embryonic hindgut morphogenesis"/>
    <property type="evidence" value="ECO:0000316"/>
    <property type="project" value="MGI"/>
</dbReference>
<dbReference type="GO" id="GO:0050673">
    <property type="term" value="P:epithelial cell proliferation"/>
    <property type="evidence" value="ECO:0000315"/>
    <property type="project" value="MGI"/>
</dbReference>
<dbReference type="GO" id="GO:0060325">
    <property type="term" value="P:face morphogenesis"/>
    <property type="evidence" value="ECO:0000316"/>
    <property type="project" value="MGI"/>
</dbReference>
<dbReference type="GO" id="GO:0008543">
    <property type="term" value="P:fibroblast growth factor receptor signaling pathway"/>
    <property type="evidence" value="ECO:0000315"/>
    <property type="project" value="MGI"/>
</dbReference>
<dbReference type="GO" id="GO:0042593">
    <property type="term" value="P:glucose homeostasis"/>
    <property type="evidence" value="ECO:0000315"/>
    <property type="project" value="MGI"/>
</dbReference>
<dbReference type="GO" id="GO:0006006">
    <property type="term" value="P:glucose metabolic process"/>
    <property type="evidence" value="ECO:0000315"/>
    <property type="project" value="MGI"/>
</dbReference>
<dbReference type="GO" id="GO:0005977">
    <property type="term" value="P:glycogen metabolic process"/>
    <property type="evidence" value="ECO:0000315"/>
    <property type="project" value="MGI"/>
</dbReference>
<dbReference type="GO" id="GO:0001701">
    <property type="term" value="P:in utero embryonic development"/>
    <property type="evidence" value="ECO:0000315"/>
    <property type="project" value="MGI"/>
</dbReference>
<dbReference type="GO" id="GO:1901142">
    <property type="term" value="P:insulin metabolic process"/>
    <property type="evidence" value="ECO:0000315"/>
    <property type="project" value="MGI"/>
</dbReference>
<dbReference type="GO" id="GO:0001678">
    <property type="term" value="P:intracellular glucose homeostasis"/>
    <property type="evidence" value="ECO:0000315"/>
    <property type="project" value="MGI"/>
</dbReference>
<dbReference type="GO" id="GO:0035264">
    <property type="term" value="P:multicellular organism growth"/>
    <property type="evidence" value="ECO:0000315"/>
    <property type="project" value="MGI"/>
</dbReference>
<dbReference type="GO" id="GO:0048625">
    <property type="term" value="P:myoblast fate commitment"/>
    <property type="evidence" value="ECO:0000315"/>
    <property type="project" value="MGI"/>
</dbReference>
<dbReference type="GO" id="GO:0030514">
    <property type="term" value="P:negative regulation of BMP signaling pathway"/>
    <property type="evidence" value="ECO:0000315"/>
    <property type="project" value="MGI"/>
</dbReference>
<dbReference type="GO" id="GO:0045599">
    <property type="term" value="P:negative regulation of fat cell differentiation"/>
    <property type="evidence" value="ECO:0000315"/>
    <property type="project" value="MGI"/>
</dbReference>
<dbReference type="GO" id="GO:0040037">
    <property type="term" value="P:negative regulation of fibroblast growth factor receptor signaling pathway"/>
    <property type="evidence" value="ECO:0000315"/>
    <property type="project" value="MGI"/>
</dbReference>
<dbReference type="GO" id="GO:0046621">
    <property type="term" value="P:negative regulation of organ growth"/>
    <property type="evidence" value="ECO:0000315"/>
    <property type="project" value="MGI"/>
</dbReference>
<dbReference type="GO" id="GO:0000122">
    <property type="term" value="P:negative regulation of transcription by RNA polymerase II"/>
    <property type="evidence" value="ECO:0000315"/>
    <property type="project" value="MGI"/>
</dbReference>
<dbReference type="GO" id="GO:0021915">
    <property type="term" value="P:neural tube development"/>
    <property type="evidence" value="ECO:0000316"/>
    <property type="project" value="MGI"/>
</dbReference>
<dbReference type="GO" id="GO:0042475">
    <property type="term" value="P:odontogenesis of dentin-containing tooth"/>
    <property type="evidence" value="ECO:0000316"/>
    <property type="project" value="MGI"/>
</dbReference>
<dbReference type="GO" id="GO:0014003">
    <property type="term" value="P:oligodendrocyte development"/>
    <property type="evidence" value="ECO:0000315"/>
    <property type="project" value="MGI"/>
</dbReference>
<dbReference type="GO" id="GO:0035265">
    <property type="term" value="P:organ growth"/>
    <property type="evidence" value="ECO:0000315"/>
    <property type="project" value="MGI"/>
</dbReference>
<dbReference type="GO" id="GO:0021983">
    <property type="term" value="P:pituitary gland development"/>
    <property type="evidence" value="ECO:0000315"/>
    <property type="project" value="MGI"/>
</dbReference>
<dbReference type="GO" id="GO:0043065">
    <property type="term" value="P:positive regulation of apoptotic process"/>
    <property type="evidence" value="ECO:0000315"/>
    <property type="project" value="MGI"/>
</dbReference>
<dbReference type="GO" id="GO:0045893">
    <property type="term" value="P:positive regulation of DNA-templated transcription"/>
    <property type="evidence" value="ECO:0000315"/>
    <property type="project" value="BHF-UCL"/>
</dbReference>
<dbReference type="GO" id="GO:0050679">
    <property type="term" value="P:positive regulation of epithelial cell proliferation"/>
    <property type="evidence" value="ECO:0000315"/>
    <property type="project" value="MGI"/>
</dbReference>
<dbReference type="GO" id="GO:0045722">
    <property type="term" value="P:positive regulation of gluconeogenesis"/>
    <property type="evidence" value="ECO:0000315"/>
    <property type="project" value="MGI"/>
</dbReference>
<dbReference type="GO" id="GO:0032024">
    <property type="term" value="P:positive regulation of insulin secretion"/>
    <property type="evidence" value="ECO:0000315"/>
    <property type="project" value="BHF-UCL"/>
</dbReference>
<dbReference type="GO" id="GO:0046889">
    <property type="term" value="P:positive regulation of lipid biosynthetic process"/>
    <property type="evidence" value="ECO:0000315"/>
    <property type="project" value="MGI"/>
</dbReference>
<dbReference type="GO" id="GO:0045944">
    <property type="term" value="P:positive regulation of transcription by RNA polymerase II"/>
    <property type="evidence" value="ECO:0000314"/>
    <property type="project" value="BHF-UCL"/>
</dbReference>
<dbReference type="GO" id="GO:0010867">
    <property type="term" value="P:positive regulation of triglyceride biosynthetic process"/>
    <property type="evidence" value="ECO:0000315"/>
    <property type="project" value="MGI"/>
</dbReference>
<dbReference type="GO" id="GO:0009791">
    <property type="term" value="P:post-embryonic development"/>
    <property type="evidence" value="ECO:0000315"/>
    <property type="project" value="MGI"/>
</dbReference>
<dbReference type="GO" id="GO:0006355">
    <property type="term" value="P:regulation of DNA-templated transcription"/>
    <property type="evidence" value="ECO:0000314"/>
    <property type="project" value="MGI"/>
</dbReference>
<dbReference type="GO" id="GO:0006111">
    <property type="term" value="P:regulation of gluconeogenesis"/>
    <property type="evidence" value="ECO:0000315"/>
    <property type="project" value="MGI"/>
</dbReference>
<dbReference type="GO" id="GO:0061178">
    <property type="term" value="P:regulation of insulin secretion involved in cellular response to glucose stimulus"/>
    <property type="evidence" value="ECO:0000315"/>
    <property type="project" value="MGI"/>
</dbReference>
<dbReference type="GO" id="GO:0031641">
    <property type="term" value="P:regulation of myelination"/>
    <property type="evidence" value="ECO:0000315"/>
    <property type="project" value="MGI"/>
</dbReference>
<dbReference type="GO" id="GO:0048713">
    <property type="term" value="P:regulation of oligodendrocyte differentiation"/>
    <property type="evidence" value="ECO:0000315"/>
    <property type="project" value="MGI"/>
</dbReference>
<dbReference type="GO" id="GO:0048641">
    <property type="term" value="P:regulation of skeletal muscle tissue development"/>
    <property type="evidence" value="ECO:0000315"/>
    <property type="project" value="MGI"/>
</dbReference>
<dbReference type="GO" id="GO:0006357">
    <property type="term" value="P:regulation of transcription by RNA polymerase II"/>
    <property type="evidence" value="ECO:0000315"/>
    <property type="project" value="BHF-UCL"/>
</dbReference>
<dbReference type="GO" id="GO:0009749">
    <property type="term" value="P:response to glucose"/>
    <property type="evidence" value="ECO:0000315"/>
    <property type="project" value="BHF-UCL"/>
</dbReference>
<dbReference type="GO" id="GO:0032252">
    <property type="term" value="P:secretory granule localization"/>
    <property type="evidence" value="ECO:0000315"/>
    <property type="project" value="MGI"/>
</dbReference>
<dbReference type="GO" id="GO:0043588">
    <property type="term" value="P:skin development"/>
    <property type="evidence" value="ECO:0000316"/>
    <property type="project" value="MGI"/>
</dbReference>
<dbReference type="GO" id="GO:0035019">
    <property type="term" value="P:somatic stem cell population maintenance"/>
    <property type="evidence" value="ECO:0000315"/>
    <property type="project" value="MGI"/>
</dbReference>
<dbReference type="CDD" id="cd21996">
    <property type="entry name" value="HMG-box_TCF7-like"/>
    <property type="match status" value="1"/>
</dbReference>
<dbReference type="FunFam" id="1.10.30.10:FF:000001">
    <property type="entry name" value="transcription factor 7 isoform X2"/>
    <property type="match status" value="1"/>
</dbReference>
<dbReference type="FunFam" id="4.10.900.10:FF:000002">
    <property type="entry name" value="transcription factor 7-like 2 isoform X1"/>
    <property type="match status" value="1"/>
</dbReference>
<dbReference type="Gene3D" id="1.10.30.10">
    <property type="entry name" value="High mobility group box domain"/>
    <property type="match status" value="1"/>
</dbReference>
<dbReference type="Gene3D" id="4.10.900.10">
    <property type="entry name" value="TCF3-CBD (Catenin binding domain)"/>
    <property type="match status" value="1"/>
</dbReference>
<dbReference type="InterPro" id="IPR027397">
    <property type="entry name" value="Catenin-bd_sf"/>
</dbReference>
<dbReference type="InterPro" id="IPR013558">
    <property type="entry name" value="CTNNB1-bd_N"/>
</dbReference>
<dbReference type="InterPro" id="IPR009071">
    <property type="entry name" value="HMG_box_dom"/>
</dbReference>
<dbReference type="InterPro" id="IPR036910">
    <property type="entry name" value="HMG_box_dom_sf"/>
</dbReference>
<dbReference type="InterPro" id="IPR024940">
    <property type="entry name" value="TCF/LEF"/>
</dbReference>
<dbReference type="PANTHER" id="PTHR10373">
    <property type="entry name" value="TRANSCRIPTION FACTOR 7 FAMILY MEMBER"/>
    <property type="match status" value="1"/>
</dbReference>
<dbReference type="PANTHER" id="PTHR10373:SF32">
    <property type="entry name" value="TRANSCRIPTION FACTOR 7-LIKE 2"/>
    <property type="match status" value="1"/>
</dbReference>
<dbReference type="Pfam" id="PF08347">
    <property type="entry name" value="CTNNB1_binding"/>
    <property type="match status" value="1"/>
</dbReference>
<dbReference type="Pfam" id="PF00505">
    <property type="entry name" value="HMG_box"/>
    <property type="match status" value="1"/>
</dbReference>
<dbReference type="SMART" id="SM01366">
    <property type="entry name" value="c-clamp"/>
    <property type="match status" value="1"/>
</dbReference>
<dbReference type="SMART" id="SM00398">
    <property type="entry name" value="HMG"/>
    <property type="match status" value="1"/>
</dbReference>
<dbReference type="SUPFAM" id="SSF47095">
    <property type="entry name" value="HMG-box"/>
    <property type="match status" value="1"/>
</dbReference>
<dbReference type="PROSITE" id="PS50118">
    <property type="entry name" value="HMG_BOX_2"/>
    <property type="match status" value="1"/>
</dbReference>